<gene>
    <name type="primary">adhA</name>
    <name type="ordered locus">MT1911</name>
</gene>
<evidence type="ECO:0000250" key="1"/>
<evidence type="ECO:0000305" key="2"/>
<accession>P9WQC0</accession>
<accession>L0T838</accession>
<accession>P95153</accession>
<accession>Q7D7W3</accession>
<organism>
    <name type="scientific">Mycobacterium tuberculosis (strain CDC 1551 / Oshkosh)</name>
    <dbReference type="NCBI Taxonomy" id="83331"/>
    <lineage>
        <taxon>Bacteria</taxon>
        <taxon>Bacillati</taxon>
        <taxon>Actinomycetota</taxon>
        <taxon>Actinomycetes</taxon>
        <taxon>Mycobacteriales</taxon>
        <taxon>Mycobacteriaceae</taxon>
        <taxon>Mycobacterium</taxon>
        <taxon>Mycobacterium tuberculosis complex</taxon>
    </lineage>
</organism>
<name>ADHA_MYCTO</name>
<sequence length="346" mass="36632">MVSPATTATMSAWQVRRPGPMDTGPLERVTTRVPRPAPSELLVAVHACGVCRTDLHVTEGDLPVHRERVIPGHEVVGEVIEVGSAVGAAAGGEFDRGDRVGIAWLRHTCGVCKYCRRGSENLCPQSRYTGWDADGGYAEFTTVPAAFAHHLPSGYSDSELAPLLCAGIIGYRSLLRTELPPGGRLGLYGFGGSAHITAQVALAQGAEIHVMTRGARARKLALQLGAASAQDAADRPPVPLDAAILFAPVGDLVLPALEALDRGGILAIAGIHLTDIPDLNYQQHLFQERQIRSVTSNTRADARAFFDFAAQHHIEVTTPEYPLGQADRALGDLSAGRIAGAAVLLI</sequence>
<comment type="catalytic activity">
    <reaction>
        <text>a primary alcohol + NAD(+) = an aldehyde + NADH + H(+)</text>
        <dbReference type="Rhea" id="RHEA:10736"/>
        <dbReference type="ChEBI" id="CHEBI:15378"/>
        <dbReference type="ChEBI" id="CHEBI:15734"/>
        <dbReference type="ChEBI" id="CHEBI:17478"/>
        <dbReference type="ChEBI" id="CHEBI:57540"/>
        <dbReference type="ChEBI" id="CHEBI:57945"/>
        <dbReference type="EC" id="1.1.1.1"/>
    </reaction>
</comment>
<comment type="catalytic activity">
    <reaction>
        <text>a secondary alcohol + NAD(+) = a ketone + NADH + H(+)</text>
        <dbReference type="Rhea" id="RHEA:10740"/>
        <dbReference type="ChEBI" id="CHEBI:15378"/>
        <dbReference type="ChEBI" id="CHEBI:17087"/>
        <dbReference type="ChEBI" id="CHEBI:35681"/>
        <dbReference type="ChEBI" id="CHEBI:57540"/>
        <dbReference type="ChEBI" id="CHEBI:57945"/>
        <dbReference type="EC" id="1.1.1.1"/>
    </reaction>
</comment>
<comment type="cofactor">
    <cofactor evidence="1">
        <name>Zn(2+)</name>
        <dbReference type="ChEBI" id="CHEBI:29105"/>
    </cofactor>
    <text evidence="1">Binds 2 Zn(2+) ions per subunit.</text>
</comment>
<comment type="similarity">
    <text evidence="2">Belongs to the zinc-containing alcohol dehydrogenase family.</text>
</comment>
<comment type="sequence caution" evidence="2">
    <conflict type="erroneous initiation">
        <sequence resource="EMBL-CDS" id="AAK46182"/>
    </conflict>
</comment>
<reference key="1">
    <citation type="journal article" date="2002" name="J. Bacteriol.">
        <title>Whole-genome comparison of Mycobacterium tuberculosis clinical and laboratory strains.</title>
        <authorList>
            <person name="Fleischmann R.D."/>
            <person name="Alland D."/>
            <person name="Eisen J.A."/>
            <person name="Carpenter L."/>
            <person name="White O."/>
            <person name="Peterson J.D."/>
            <person name="DeBoy R.T."/>
            <person name="Dodson R.J."/>
            <person name="Gwinn M.L."/>
            <person name="Haft D.H."/>
            <person name="Hickey E.K."/>
            <person name="Kolonay J.F."/>
            <person name="Nelson W.C."/>
            <person name="Umayam L.A."/>
            <person name="Ermolaeva M.D."/>
            <person name="Salzberg S.L."/>
            <person name="Delcher A."/>
            <person name="Utterback T.R."/>
            <person name="Weidman J.F."/>
            <person name="Khouri H.M."/>
            <person name="Gill J."/>
            <person name="Mikula A."/>
            <person name="Bishai W."/>
            <person name="Jacobs W.R. Jr."/>
            <person name="Venter J.C."/>
            <person name="Fraser C.M."/>
        </authorList>
    </citation>
    <scope>NUCLEOTIDE SEQUENCE [LARGE SCALE GENOMIC DNA]</scope>
    <source>
        <strain>CDC 1551 / Oshkosh</strain>
    </source>
</reference>
<feature type="chain" id="PRO_0000426802" description="Probable alcohol dehydrogenase AdhA">
    <location>
        <begin position="1"/>
        <end position="346"/>
    </location>
</feature>
<feature type="binding site" evidence="1">
    <location>
        <position position="51"/>
    </location>
    <ligand>
        <name>Zn(2+)</name>
        <dbReference type="ChEBI" id="CHEBI:29105"/>
        <label>1</label>
        <note>catalytic</note>
    </ligand>
</feature>
<feature type="binding site" evidence="1">
    <location>
        <position position="73"/>
    </location>
    <ligand>
        <name>Zn(2+)</name>
        <dbReference type="ChEBI" id="CHEBI:29105"/>
        <label>1</label>
        <note>catalytic</note>
    </ligand>
</feature>
<feature type="binding site" evidence="1">
    <location>
        <position position="109"/>
    </location>
    <ligand>
        <name>Zn(2+)</name>
        <dbReference type="ChEBI" id="CHEBI:29105"/>
        <label>2</label>
    </ligand>
</feature>
<feature type="binding site" evidence="1">
    <location>
        <position position="112"/>
    </location>
    <ligand>
        <name>Zn(2+)</name>
        <dbReference type="ChEBI" id="CHEBI:29105"/>
        <label>2</label>
    </ligand>
</feature>
<feature type="binding site" evidence="1">
    <location>
        <position position="115"/>
    </location>
    <ligand>
        <name>Zn(2+)</name>
        <dbReference type="ChEBI" id="CHEBI:29105"/>
        <label>2</label>
    </ligand>
</feature>
<feature type="binding site" evidence="1">
    <location>
        <position position="123"/>
    </location>
    <ligand>
        <name>Zn(2+)</name>
        <dbReference type="ChEBI" id="CHEBI:29105"/>
        <label>2</label>
    </ligand>
</feature>
<feature type="binding site" evidence="1">
    <location>
        <position position="165"/>
    </location>
    <ligand>
        <name>Zn(2+)</name>
        <dbReference type="ChEBI" id="CHEBI:29105"/>
        <label>1</label>
        <note>catalytic</note>
    </ligand>
</feature>
<proteinExistence type="inferred from homology"/>
<protein>
    <recommendedName>
        <fullName>Probable alcohol dehydrogenase AdhA</fullName>
        <ecNumber>1.1.1.1</ecNumber>
    </recommendedName>
</protein>
<dbReference type="EC" id="1.1.1.1"/>
<dbReference type="EMBL" id="AE000516">
    <property type="protein sequence ID" value="AAK46182.1"/>
    <property type="status" value="ALT_INIT"/>
    <property type="molecule type" value="Genomic_DNA"/>
</dbReference>
<dbReference type="PIR" id="F70666">
    <property type="entry name" value="F70666"/>
</dbReference>
<dbReference type="RefSeq" id="WP_003409345.1">
    <property type="nucleotide sequence ID" value="NZ_KK341227.1"/>
</dbReference>
<dbReference type="SMR" id="P9WQC0"/>
<dbReference type="KEGG" id="mtc:MT1911"/>
<dbReference type="PATRIC" id="fig|83331.31.peg.2056"/>
<dbReference type="HOGENOM" id="CLU_026673_20_7_11"/>
<dbReference type="Proteomes" id="UP000001020">
    <property type="component" value="Chromosome"/>
</dbReference>
<dbReference type="GO" id="GO:0005737">
    <property type="term" value="C:cytoplasm"/>
    <property type="evidence" value="ECO:0007669"/>
    <property type="project" value="TreeGrafter"/>
</dbReference>
<dbReference type="GO" id="GO:0004022">
    <property type="term" value="F:alcohol dehydrogenase (NAD+) activity"/>
    <property type="evidence" value="ECO:0007669"/>
    <property type="project" value="UniProtKB-EC"/>
</dbReference>
<dbReference type="GO" id="GO:0008270">
    <property type="term" value="F:zinc ion binding"/>
    <property type="evidence" value="ECO:0007669"/>
    <property type="project" value="InterPro"/>
</dbReference>
<dbReference type="CDD" id="cd08298">
    <property type="entry name" value="CAD2"/>
    <property type="match status" value="1"/>
</dbReference>
<dbReference type="FunFam" id="3.40.50.720:FF:000275">
    <property type="entry name" value="Alcohol dehydrogenase AdhA"/>
    <property type="match status" value="1"/>
</dbReference>
<dbReference type="Gene3D" id="3.90.180.10">
    <property type="entry name" value="Medium-chain alcohol dehydrogenases, catalytic domain"/>
    <property type="match status" value="1"/>
</dbReference>
<dbReference type="Gene3D" id="3.40.50.720">
    <property type="entry name" value="NAD(P)-binding Rossmann-like Domain"/>
    <property type="match status" value="1"/>
</dbReference>
<dbReference type="InterPro" id="IPR013154">
    <property type="entry name" value="ADH-like_N"/>
</dbReference>
<dbReference type="InterPro" id="IPR002328">
    <property type="entry name" value="ADH_Zn_CS"/>
</dbReference>
<dbReference type="InterPro" id="IPR014187">
    <property type="entry name" value="ADH_Zn_typ-2"/>
</dbReference>
<dbReference type="InterPro" id="IPR011032">
    <property type="entry name" value="GroES-like_sf"/>
</dbReference>
<dbReference type="InterPro" id="IPR036291">
    <property type="entry name" value="NAD(P)-bd_dom_sf"/>
</dbReference>
<dbReference type="NCBIfam" id="TIGR02822">
    <property type="entry name" value="adh_fam_2"/>
    <property type="match status" value="1"/>
</dbReference>
<dbReference type="PANTHER" id="PTHR42940">
    <property type="entry name" value="ALCOHOL DEHYDROGENASE 1-RELATED"/>
    <property type="match status" value="1"/>
</dbReference>
<dbReference type="PANTHER" id="PTHR42940:SF8">
    <property type="entry name" value="VACUOLAR PROTEIN SORTING-ASSOCIATED PROTEIN 11"/>
    <property type="match status" value="1"/>
</dbReference>
<dbReference type="Pfam" id="PF08240">
    <property type="entry name" value="ADH_N"/>
    <property type="match status" value="1"/>
</dbReference>
<dbReference type="SUPFAM" id="SSF50129">
    <property type="entry name" value="GroES-like"/>
    <property type="match status" value="1"/>
</dbReference>
<dbReference type="SUPFAM" id="SSF51735">
    <property type="entry name" value="NAD(P)-binding Rossmann-fold domains"/>
    <property type="match status" value="1"/>
</dbReference>
<dbReference type="PROSITE" id="PS00059">
    <property type="entry name" value="ADH_ZINC"/>
    <property type="match status" value="1"/>
</dbReference>
<keyword id="KW-0479">Metal-binding</keyword>
<keyword id="KW-0520">NAD</keyword>
<keyword id="KW-0560">Oxidoreductase</keyword>
<keyword id="KW-1185">Reference proteome</keyword>
<keyword id="KW-0862">Zinc</keyword>